<protein>
    <recommendedName>
        <fullName evidence="1">Flagellar protein FliT</fullName>
    </recommendedName>
</protein>
<organism>
    <name type="scientific">Yersinia pestis bv. Antiqua (strain Nepal516)</name>
    <dbReference type="NCBI Taxonomy" id="377628"/>
    <lineage>
        <taxon>Bacteria</taxon>
        <taxon>Pseudomonadati</taxon>
        <taxon>Pseudomonadota</taxon>
        <taxon>Gammaproteobacteria</taxon>
        <taxon>Enterobacterales</taxon>
        <taxon>Yersiniaceae</taxon>
        <taxon>Yersinia</taxon>
    </lineage>
</organism>
<feature type="chain" id="PRO_0000353900" description="Flagellar protein FliT">
    <location>
        <begin position="1"/>
        <end position="120"/>
    </location>
</feature>
<feature type="region of interest" description="Required for homodimerization" evidence="1">
    <location>
        <begin position="1"/>
        <end position="50"/>
    </location>
</feature>
<feature type="region of interest" description="FliD binding" evidence="1">
    <location>
        <begin position="60"/>
        <end position="98"/>
    </location>
</feature>
<accession>Q1CHB8</accession>
<accession>C4GUI0</accession>
<dbReference type="EMBL" id="CP000305">
    <property type="protein sequence ID" value="ABG18612.1"/>
    <property type="molecule type" value="Genomic_DNA"/>
</dbReference>
<dbReference type="EMBL" id="ACNQ01000013">
    <property type="protein sequence ID" value="EEO76367.1"/>
    <property type="molecule type" value="Genomic_DNA"/>
</dbReference>
<dbReference type="PIR" id="AD0224">
    <property type="entry name" value="AD0224"/>
</dbReference>
<dbReference type="RefSeq" id="WP_002211148.1">
    <property type="nucleotide sequence ID" value="NZ_ACNQ01000013.1"/>
</dbReference>
<dbReference type="SMR" id="Q1CHB8"/>
<dbReference type="GeneID" id="57976742"/>
<dbReference type="KEGG" id="ypn:YPN_2284"/>
<dbReference type="HOGENOM" id="CLU_155793_1_0_6"/>
<dbReference type="Proteomes" id="UP000008936">
    <property type="component" value="Chromosome"/>
</dbReference>
<dbReference type="GO" id="GO:0005829">
    <property type="term" value="C:cytosol"/>
    <property type="evidence" value="ECO:0007669"/>
    <property type="project" value="UniProtKB-SubCell"/>
</dbReference>
<dbReference type="GO" id="GO:0044781">
    <property type="term" value="P:bacterial-type flagellum organization"/>
    <property type="evidence" value="ECO:0007669"/>
    <property type="project" value="UniProtKB-KW"/>
</dbReference>
<dbReference type="GO" id="GO:1902209">
    <property type="term" value="P:negative regulation of bacterial-type flagellum assembly"/>
    <property type="evidence" value="ECO:0007669"/>
    <property type="project" value="UniProtKB-UniRule"/>
</dbReference>
<dbReference type="GO" id="GO:0006457">
    <property type="term" value="P:protein folding"/>
    <property type="evidence" value="ECO:0007669"/>
    <property type="project" value="UniProtKB-UniRule"/>
</dbReference>
<dbReference type="Gene3D" id="1.20.58.380">
    <property type="entry name" value="Flagellar protein flit"/>
    <property type="match status" value="1"/>
</dbReference>
<dbReference type="HAMAP" id="MF_01180">
    <property type="entry name" value="FliT"/>
    <property type="match status" value="1"/>
</dbReference>
<dbReference type="InterPro" id="IPR008622">
    <property type="entry name" value="FliT"/>
</dbReference>
<dbReference type="NCBIfam" id="NF007836">
    <property type="entry name" value="PRK10548.1"/>
    <property type="match status" value="1"/>
</dbReference>
<dbReference type="Pfam" id="PF05400">
    <property type="entry name" value="FliT"/>
    <property type="match status" value="1"/>
</dbReference>
<name>FLIT_YERPN</name>
<sequence>MERHQHLLSEYQQILTLSEQMLMLATVENWNALVDLEMTYLKAVENTANITISSCTSPVLQELLRQKLRSILENEIEIKRLLQRRLDKLSELVGQSTRQQAVNRTYGQFPDQALLLGETQ</sequence>
<keyword id="KW-1005">Bacterial flagellum biogenesis</keyword>
<keyword id="KW-0143">Chaperone</keyword>
<keyword id="KW-0963">Cytoplasm</keyword>
<keyword id="KW-0678">Repressor</keyword>
<keyword id="KW-0804">Transcription</keyword>
<keyword id="KW-0805">Transcription regulation</keyword>
<proteinExistence type="inferred from homology"/>
<reference key="1">
    <citation type="journal article" date="2006" name="J. Bacteriol.">
        <title>Complete genome sequence of Yersinia pestis strains Antiqua and Nepal516: evidence of gene reduction in an emerging pathogen.</title>
        <authorList>
            <person name="Chain P.S.G."/>
            <person name="Hu P."/>
            <person name="Malfatti S.A."/>
            <person name="Radnedge L."/>
            <person name="Larimer F."/>
            <person name="Vergez L.M."/>
            <person name="Worsham P."/>
            <person name="Chu M.C."/>
            <person name="Andersen G.L."/>
        </authorList>
    </citation>
    <scope>NUCLEOTIDE SEQUENCE [LARGE SCALE GENOMIC DNA]</scope>
    <source>
        <strain>Nepal516</strain>
    </source>
</reference>
<reference key="2">
    <citation type="submission" date="2009-04" db="EMBL/GenBank/DDBJ databases">
        <title>Yersinia pestis Nepal516A whole genome shotgun sequencing project.</title>
        <authorList>
            <person name="Plunkett G. III"/>
            <person name="Anderson B.D."/>
            <person name="Baumler D.J."/>
            <person name="Burland V."/>
            <person name="Cabot E.L."/>
            <person name="Glasner J.D."/>
            <person name="Mau B."/>
            <person name="Neeno-Eckwall E."/>
            <person name="Perna N.T."/>
            <person name="Munk A.C."/>
            <person name="Tapia R."/>
            <person name="Green L.D."/>
            <person name="Rogers Y.C."/>
            <person name="Detter J.C."/>
            <person name="Bruce D.C."/>
            <person name="Brettin T.S."/>
        </authorList>
    </citation>
    <scope>NUCLEOTIDE SEQUENCE [LARGE SCALE GENOMIC DNA]</scope>
    <source>
        <strain>Nepal516</strain>
    </source>
</reference>
<evidence type="ECO:0000255" key="1">
    <source>
        <dbReference type="HAMAP-Rule" id="MF_01180"/>
    </source>
</evidence>
<comment type="function">
    <text evidence="1">Dual-function protein that regulates the transcription of class 2 flagellar operons and that also acts as an export chaperone for the filament-capping protein FliD. As a transcriptional regulator, acts as an anti-FlhDC factor; it directly binds FlhC, thus inhibiting the binding of the FlhC/FlhD complex to class 2 promoters, resulting in decreased expression of class 2 flagellar operons. As a chaperone, effects FliD transition to the membrane by preventing its premature polymerization, and by directing it to the export apparatus.</text>
</comment>
<comment type="subunit">
    <text evidence="1">Homodimer. Interacts with FliD and FlhC.</text>
</comment>
<comment type="subcellular location">
    <subcellularLocation>
        <location evidence="1">Cytoplasm</location>
        <location evidence="1">Cytosol</location>
    </subcellularLocation>
</comment>
<comment type="similarity">
    <text evidence="1">Belongs to the FliT family.</text>
</comment>
<gene>
    <name evidence="1" type="primary">fliT</name>
    <name type="ordered locus">YPN_2284</name>
    <name type="ORF">YP516_2569</name>
</gene>